<sequence>MYTSGYAHRSSSFSSAASKIARVSTENTTAGLISEVVYREDQPMMTQLLLLPLLQQLGQQSRWQLWLTPQQKLSREWVQASGLPLTKVMQISQLSPCHTVESMVRALRTGNYSVVIGWLTDDLTEEEHAELVDAANEGNAMGFIMRPVSASSHTTRQLSGLKIHSNLYH</sequence>
<keyword id="KW-0131">Cell cycle</keyword>
<keyword id="KW-0132">Cell division</keyword>
<keyword id="KW-0227">DNA damage</keyword>
<keyword id="KW-0717">Septation</keyword>
<keyword id="KW-0742">SOS response</keyword>
<dbReference type="EMBL" id="CP000266">
    <property type="protein sequence ID" value="ABF03188.1"/>
    <property type="molecule type" value="Genomic_DNA"/>
</dbReference>
<dbReference type="RefSeq" id="WP_000288715.1">
    <property type="nucleotide sequence ID" value="NC_008258.1"/>
</dbReference>
<dbReference type="SMR" id="Q0T677"/>
<dbReference type="KEGG" id="sfv:SFV_0966"/>
<dbReference type="HOGENOM" id="CLU_118972_1_0_6"/>
<dbReference type="Proteomes" id="UP000000659">
    <property type="component" value="Chromosome"/>
</dbReference>
<dbReference type="GO" id="GO:0000917">
    <property type="term" value="P:division septum assembly"/>
    <property type="evidence" value="ECO:0007669"/>
    <property type="project" value="UniProtKB-KW"/>
</dbReference>
<dbReference type="GO" id="GO:0006281">
    <property type="term" value="P:DNA repair"/>
    <property type="evidence" value="ECO:0007669"/>
    <property type="project" value="TreeGrafter"/>
</dbReference>
<dbReference type="GO" id="GO:0051782">
    <property type="term" value="P:negative regulation of cell division"/>
    <property type="evidence" value="ECO:0007669"/>
    <property type="project" value="UniProtKB-UniRule"/>
</dbReference>
<dbReference type="GO" id="GO:0009432">
    <property type="term" value="P:SOS response"/>
    <property type="evidence" value="ECO:0007669"/>
    <property type="project" value="UniProtKB-UniRule"/>
</dbReference>
<dbReference type="FunFam" id="3.40.50.300:FF:000417">
    <property type="entry name" value="Cell division inhibitor SulA"/>
    <property type="match status" value="1"/>
</dbReference>
<dbReference type="Gene3D" id="3.40.50.300">
    <property type="entry name" value="P-loop containing nucleotide triphosphate hydrolases"/>
    <property type="match status" value="1"/>
</dbReference>
<dbReference type="HAMAP" id="MF_01179">
    <property type="entry name" value="SulA"/>
    <property type="match status" value="1"/>
</dbReference>
<dbReference type="InterPro" id="IPR004596">
    <property type="entry name" value="Cell_div_suppressor_SulA"/>
</dbReference>
<dbReference type="InterPro" id="IPR027417">
    <property type="entry name" value="P-loop_NTPase"/>
</dbReference>
<dbReference type="InterPro" id="IPR050356">
    <property type="entry name" value="SulA_CellDiv_inhibitor"/>
</dbReference>
<dbReference type="InterPro" id="IPR047696">
    <property type="entry name" value="SulA_enterobact"/>
</dbReference>
<dbReference type="NCBIfam" id="NF007892">
    <property type="entry name" value="PRK10595.1"/>
    <property type="match status" value="1"/>
</dbReference>
<dbReference type="NCBIfam" id="TIGR00623">
    <property type="entry name" value="SOS_SulA_coli"/>
    <property type="match status" value="1"/>
</dbReference>
<dbReference type="PANTHER" id="PTHR35369">
    <property type="entry name" value="BLR3025 PROTEIN-RELATED"/>
    <property type="match status" value="1"/>
</dbReference>
<dbReference type="PANTHER" id="PTHR35369:SF4">
    <property type="entry name" value="CELL DIVISION INHIBITOR SULA"/>
    <property type="match status" value="1"/>
</dbReference>
<dbReference type="Pfam" id="PF03846">
    <property type="entry name" value="SulA"/>
    <property type="match status" value="1"/>
</dbReference>
<dbReference type="PIRSF" id="PIRSF003093">
    <property type="entry name" value="SulA"/>
    <property type="match status" value="1"/>
</dbReference>
<dbReference type="SUPFAM" id="SSF52540">
    <property type="entry name" value="P-loop containing nucleoside triphosphate hydrolases"/>
    <property type="match status" value="1"/>
</dbReference>
<comment type="function">
    <text evidence="1">Component of the SOS system and an inhibitor of cell division. Accumulation of SulA causes rapid cessation of cell division and the appearance of long, non-septate filaments. In the presence of GTP, binds a polymerization-competent form of FtsZ in a 1:1 ratio, thus inhibiting FtsZ polymerization and therefore preventing it from participating in the assembly of the Z ring. This mechanism prevents the premature segregation of damaged DNA to daughter cells during cell division.</text>
</comment>
<comment type="subunit">
    <text evidence="1">Interacts with FtsZ.</text>
</comment>
<comment type="induction">
    <text evidence="1">By DNA damage, as part of the SOS response.</text>
</comment>
<comment type="PTM">
    <text evidence="1">Is rapidly cleaved and degraded by the Lon protease once DNA damage is repaired.</text>
</comment>
<comment type="similarity">
    <text evidence="1">Belongs to the SulA family.</text>
</comment>
<reference key="1">
    <citation type="journal article" date="2006" name="BMC Genomics">
        <title>Complete genome sequence of Shigella flexneri 5b and comparison with Shigella flexneri 2a.</title>
        <authorList>
            <person name="Nie H."/>
            <person name="Yang F."/>
            <person name="Zhang X."/>
            <person name="Yang J."/>
            <person name="Chen L."/>
            <person name="Wang J."/>
            <person name="Xiong Z."/>
            <person name="Peng J."/>
            <person name="Sun L."/>
            <person name="Dong J."/>
            <person name="Xue Y."/>
            <person name="Xu X."/>
            <person name="Chen S."/>
            <person name="Yao Z."/>
            <person name="Shen Y."/>
            <person name="Jin Q."/>
        </authorList>
    </citation>
    <scope>NUCLEOTIDE SEQUENCE [LARGE SCALE GENOMIC DNA]</scope>
    <source>
        <strain>8401</strain>
    </source>
</reference>
<protein>
    <recommendedName>
        <fullName evidence="1">Cell division inhibitor SulA</fullName>
    </recommendedName>
</protein>
<name>SULA_SHIF8</name>
<proteinExistence type="inferred from homology"/>
<evidence type="ECO:0000255" key="1">
    <source>
        <dbReference type="HAMAP-Rule" id="MF_01179"/>
    </source>
</evidence>
<gene>
    <name evidence="1" type="primary">sulA</name>
    <name type="ordered locus">SFV_0966</name>
</gene>
<organism>
    <name type="scientific">Shigella flexneri serotype 5b (strain 8401)</name>
    <dbReference type="NCBI Taxonomy" id="373384"/>
    <lineage>
        <taxon>Bacteria</taxon>
        <taxon>Pseudomonadati</taxon>
        <taxon>Pseudomonadota</taxon>
        <taxon>Gammaproteobacteria</taxon>
        <taxon>Enterobacterales</taxon>
        <taxon>Enterobacteriaceae</taxon>
        <taxon>Shigella</taxon>
    </lineage>
</organism>
<accession>Q0T677</accession>
<feature type="chain" id="PRO_0000343977" description="Cell division inhibitor SulA">
    <location>
        <begin position="1"/>
        <end position="169"/>
    </location>
</feature>
<feature type="region of interest" description="FtsZ binding" evidence="1">
    <location>
        <begin position="106"/>
        <end position="112"/>
    </location>
</feature>
<feature type="region of interest" description="Lon protease binding" evidence="1">
    <location>
        <begin position="162"/>
        <end position="169"/>
    </location>
</feature>
<feature type="site" description="Essential for degradation by Lon protease" evidence="1">
    <location>
        <position position="169"/>
    </location>
</feature>